<dbReference type="EC" id="1.-.-.-" evidence="9"/>
<dbReference type="EMBL" id="ACYE01000020">
    <property type="protein sequence ID" value="EFE44837.1"/>
    <property type="molecule type" value="Genomic_DNA"/>
</dbReference>
<dbReference type="RefSeq" id="XP_003025448.1">
    <property type="nucleotide sequence ID" value="XM_003025402.1"/>
</dbReference>
<dbReference type="SMR" id="D4CZZ4"/>
<dbReference type="GlyCosmos" id="D4CZZ4">
    <property type="glycosylation" value="3 sites, No reported glycans"/>
</dbReference>
<dbReference type="GeneID" id="9581674"/>
<dbReference type="KEGG" id="tve:TRV_00388"/>
<dbReference type="HOGENOM" id="CLU_040697_0_0_1"/>
<dbReference type="OrthoDB" id="4603at34384"/>
<dbReference type="Proteomes" id="UP000008383">
    <property type="component" value="Unassembled WGS sequence"/>
</dbReference>
<dbReference type="GO" id="GO:0071949">
    <property type="term" value="F:FAD binding"/>
    <property type="evidence" value="ECO:0007669"/>
    <property type="project" value="InterPro"/>
</dbReference>
<dbReference type="GO" id="GO:0004497">
    <property type="term" value="F:monooxygenase activity"/>
    <property type="evidence" value="ECO:0007669"/>
    <property type="project" value="UniProtKB-KW"/>
</dbReference>
<dbReference type="Gene3D" id="3.50.50.60">
    <property type="entry name" value="FAD/NAD(P)-binding domain"/>
    <property type="match status" value="1"/>
</dbReference>
<dbReference type="InterPro" id="IPR002938">
    <property type="entry name" value="FAD-bd"/>
</dbReference>
<dbReference type="InterPro" id="IPR036188">
    <property type="entry name" value="FAD/NAD-bd_sf"/>
</dbReference>
<dbReference type="PANTHER" id="PTHR47178:SF4">
    <property type="entry name" value="FAD-DEPENDENT MONOOXYGENASE APTC"/>
    <property type="match status" value="1"/>
</dbReference>
<dbReference type="PANTHER" id="PTHR47178">
    <property type="entry name" value="MONOOXYGENASE, FAD-BINDING"/>
    <property type="match status" value="1"/>
</dbReference>
<dbReference type="Pfam" id="PF01494">
    <property type="entry name" value="FAD_binding_3"/>
    <property type="match status" value="1"/>
</dbReference>
<dbReference type="PRINTS" id="PR00420">
    <property type="entry name" value="RNGMNOXGNASE"/>
</dbReference>
<dbReference type="SUPFAM" id="SSF51905">
    <property type="entry name" value="FAD/NAD(P)-binding domain"/>
    <property type="match status" value="1"/>
</dbReference>
<accession>D4CZZ4</accession>
<name>NSCC_TRIVH</name>
<gene>
    <name evidence="7" type="primary">nscC</name>
    <name type="ORF">TRV_00388</name>
</gene>
<proteinExistence type="inferred from homology"/>
<sequence length="412" mass="45325">MGKQQETILIIGAGIAGLTTSRLLTNNGIPNIVFEASTPDRSQGFAISLQEFGYSALLAALGDLPLSSLIRGVAPDRKIGGSGWIDQALRDNRTGEVLVAPDLTTTKQTIVRANRNALRHWIVDCGEDELDVRYGHKLQRIEGKLGDVTAVFENNAKYKGSLIIAADGVNSTARSQILPNVVPEAIPLIHYHGEFQISHSAFDELIRPHSGHSNILVGVGDRFNTPLSICNITKSQVHLDWSYSRTVKGENDILYCPNVPSEEAKQIPPALLEELDTLSLAEPWKTFLNSESLKAHRVFHWTTRCVYITQDDARHAGEQGVVFVGDSWHAMPIFGGEGGNHALLDGVELANAIITSTESSGRGSWDNVAKNYYGGAWKRSQDAVRRSTQRFFLLHRPATEWKEISEKKKTLA</sequence>
<keyword id="KW-0274">FAD</keyword>
<keyword id="KW-0285">Flavoprotein</keyword>
<keyword id="KW-0325">Glycoprotein</keyword>
<keyword id="KW-0503">Monooxygenase</keyword>
<keyword id="KW-0560">Oxidoreductase</keyword>
<keyword id="KW-0732">Signal</keyword>
<feature type="signal peptide" evidence="4">
    <location>
        <begin position="1"/>
        <end position="21"/>
    </location>
</feature>
<feature type="chain" id="PRO_0000437911" description="FAD-dependent monooxygenase nscC">
    <location>
        <begin position="22"/>
        <end position="412"/>
    </location>
</feature>
<feature type="binding site" evidence="2">
    <location>
        <position position="35"/>
    </location>
    <ligand>
        <name>FAD</name>
        <dbReference type="ChEBI" id="CHEBI:57692"/>
    </ligand>
</feature>
<feature type="binding site" evidence="2">
    <location>
        <position position="46"/>
    </location>
    <ligand>
        <name>FAD</name>
        <dbReference type="ChEBI" id="CHEBI:57692"/>
    </ligand>
</feature>
<feature type="binding site" evidence="2">
    <location>
        <position position="119"/>
    </location>
    <ligand>
        <name>FAD</name>
        <dbReference type="ChEBI" id="CHEBI:57692"/>
    </ligand>
</feature>
<feature type="binding site" evidence="2">
    <location>
        <position position="326"/>
    </location>
    <ligand>
        <name>FAD</name>
        <dbReference type="ChEBI" id="CHEBI:57692"/>
    </ligand>
</feature>
<feature type="binding site" evidence="2">
    <location>
        <position position="339"/>
    </location>
    <ligand>
        <name>FAD</name>
        <dbReference type="ChEBI" id="CHEBI:57692"/>
    </ligand>
</feature>
<feature type="glycosylation site" description="N-linked (GlcNAc...) asparagine" evidence="5">
    <location>
        <position position="92"/>
    </location>
</feature>
<feature type="glycosylation site" description="N-linked (GlcNAc...) asparagine" evidence="5">
    <location>
        <position position="170"/>
    </location>
</feature>
<feature type="glycosylation site" description="N-linked (GlcNAc...) asparagine" evidence="5">
    <location>
        <position position="231"/>
    </location>
</feature>
<comment type="function">
    <text evidence="1 3 6">FAD-dependent monooxygenase; part of the gene cluster that mediates the biosynthesis of neosartoricin B, a prenylated anthracenone that probably exhibits T-cell antiproliferative activity, suggestive of a physiological role as an immunosuppressive agent (PubMed:23758576). The non-reducing polyketide synthase nscA probably synthesizes and cyclizes the decaketide backbone (By similarity). The hydrolase nscB then mediates the product release through hydrolysis followed by spontaneous decarboxylation (By similarity). The prenyltransferase nscD catalyzes the addition of the dimethylallyl group to the aromatic C5 (By similarity). The FAD-dependent monooxygenase nscC is then responsible for the stereospecific hydroxylation at C2 (By similarity). Neosartoricin B can be converted into two additional compounds neosartoricins C and D (By similarity). Neosartoricin C is a spirocyclic compound that is cyclized through the attack of C3 hydroxyl on C14, followed by dehydration (By similarity). On the other hand, neosartoricin D is a further cyclized compound in which attack of C2 on C14 in neosartoricin C results in the formation of the acetal-containing dioxabicyclo-octanone ring (By similarity). Both of these compounds are novel and possibly represent related metabolites of the gene cluster (By similarity).</text>
</comment>
<comment type="cofactor">
    <cofactor evidence="8">
        <name>FAD</name>
        <dbReference type="ChEBI" id="CHEBI:57692"/>
    </cofactor>
</comment>
<comment type="pathway">
    <text evidence="9">Secondary metabolite biosynthesis.</text>
</comment>
<comment type="similarity">
    <text evidence="8">Belongs to the paxM FAD-dependent monooxygenase family.</text>
</comment>
<reference key="1">
    <citation type="journal article" date="2011" name="Genome Biol.">
        <title>Comparative and functional genomics provide insights into the pathogenicity of dermatophytic fungi.</title>
        <authorList>
            <person name="Burmester A."/>
            <person name="Shelest E."/>
            <person name="Gloeckner G."/>
            <person name="Heddergott C."/>
            <person name="Schindler S."/>
            <person name="Staib P."/>
            <person name="Heidel A."/>
            <person name="Felder M."/>
            <person name="Petzold A."/>
            <person name="Szafranski K."/>
            <person name="Feuermann M."/>
            <person name="Pedruzzi I."/>
            <person name="Priebe S."/>
            <person name="Groth M."/>
            <person name="Winkler R."/>
            <person name="Li W."/>
            <person name="Kniemeyer O."/>
            <person name="Schroeckh V."/>
            <person name="Hertweck C."/>
            <person name="Hube B."/>
            <person name="White T.C."/>
            <person name="Platzer M."/>
            <person name="Guthke R."/>
            <person name="Heitman J."/>
            <person name="Woestemeyer J."/>
            <person name="Zipfel P.F."/>
            <person name="Monod M."/>
            <person name="Brakhage A.A."/>
        </authorList>
    </citation>
    <scope>NUCLEOTIDE SEQUENCE [LARGE SCALE GENOMIC DNA]</scope>
    <source>
        <strain>HKI 0517</strain>
    </source>
</reference>
<reference key="2">
    <citation type="journal article" date="2013" name="ACS Synth. Biol.">
        <title>Discovery of cryptic polyketide metabolites from dermatophytes using heterologous expression in Aspergillus nidulans.</title>
        <authorList>
            <person name="Yin W.B."/>
            <person name="Chooi Y.H."/>
            <person name="Smith A.R."/>
            <person name="Cacho R.A."/>
            <person name="Hu Y."/>
            <person name="White T.C."/>
            <person name="Tang Y."/>
        </authorList>
    </citation>
    <scope>FUNCTION</scope>
</reference>
<organism>
    <name type="scientific">Trichophyton verrucosum (strain HKI 0517)</name>
    <dbReference type="NCBI Taxonomy" id="663202"/>
    <lineage>
        <taxon>Eukaryota</taxon>
        <taxon>Fungi</taxon>
        <taxon>Dikarya</taxon>
        <taxon>Ascomycota</taxon>
        <taxon>Pezizomycotina</taxon>
        <taxon>Eurotiomycetes</taxon>
        <taxon>Eurotiomycetidae</taxon>
        <taxon>Onygenales</taxon>
        <taxon>Arthrodermataceae</taxon>
        <taxon>Trichophyton</taxon>
    </lineage>
</organism>
<protein>
    <recommendedName>
        <fullName evidence="7">FAD-dependent monooxygenase nscC</fullName>
        <ecNumber evidence="9">1.-.-.-</ecNumber>
    </recommendedName>
    <alternativeName>
        <fullName evidence="7">Neosartoricin B biosynthesis protein C</fullName>
    </alternativeName>
</protein>
<evidence type="ECO:0000250" key="1">
    <source>
        <dbReference type="UniProtKB" id="A1D8J0"/>
    </source>
</evidence>
<evidence type="ECO:0000250" key="2">
    <source>
        <dbReference type="UniProtKB" id="B8M9J8"/>
    </source>
</evidence>
<evidence type="ECO:0000250" key="3">
    <source>
        <dbReference type="UniProtKB" id="F2S701"/>
    </source>
</evidence>
<evidence type="ECO:0000255" key="4"/>
<evidence type="ECO:0000255" key="5">
    <source>
        <dbReference type="PROSITE-ProRule" id="PRU00498"/>
    </source>
</evidence>
<evidence type="ECO:0000269" key="6">
    <source>
    </source>
</evidence>
<evidence type="ECO:0000303" key="7">
    <source>
    </source>
</evidence>
<evidence type="ECO:0000305" key="8"/>
<evidence type="ECO:0000305" key="9">
    <source>
    </source>
</evidence>